<sequence>MKFELDTTDGRARRGRLVFDRGVVETPAFMPVGTYGTVKGMTPEEVEATGAQIILGNTFHLWLRPGQEIMKLHGDLHDFMQWKGPILTDSGGFQVFSLGDIRKITEQGVHFRNPINGDPIFLDPEKSMEIQYDLGSDIVMIFDECTPYPADWDYAKRSMEMSLRWAKRSRDRFDSLGNKNALFGIIQGSVYEDLRDISVKGLVEIGFDGYAVGGLAVGEPKADMHRILEHVCPQIPADKPRYLMGVGKPEDLVEGVRRGIDMFDCVMPTRNARNGHLFVTDGVVKIRNAKHKSDTSPLDAECDCYTCRNYSRAYLHHLDRCNEILGARLNTIHNLRYYQRLMAGLRKAIEEGKLESFVTKFYQRQGRPVPPLNVD</sequence>
<comment type="function">
    <text evidence="1">Catalyzes the base-exchange of a guanine (G) residue with the queuine precursor 7-aminomethyl-7-deazaguanine (PreQ1) at position 34 (anticodon wobble position) in tRNAs with GU(N) anticodons (tRNA-Asp, -Asn, -His and -Tyr). Catalysis occurs through a double-displacement mechanism. The nucleophile active site attacks the C1' of nucleotide 34 to detach the guanine base from the RNA, forming a covalent enzyme-RNA intermediate. The proton acceptor active site deprotonates the incoming PreQ1, allowing a nucleophilic attack on the C1' of the ribose to form the product. After dissociation, two additional enzymatic reactions on the tRNA convert PreQ1 to queuine (Q), resulting in the hypermodified nucleoside queuosine (7-(((4,5-cis-dihydroxy-2-cyclopenten-1-yl)amino)methyl)-7-deazaguanosine).</text>
</comment>
<comment type="catalytic activity">
    <reaction evidence="1">
        <text>7-aminomethyl-7-carbaguanine + guanosine(34) in tRNA = 7-aminomethyl-7-carbaguanosine(34) in tRNA + guanine</text>
        <dbReference type="Rhea" id="RHEA:24104"/>
        <dbReference type="Rhea" id="RHEA-COMP:10341"/>
        <dbReference type="Rhea" id="RHEA-COMP:10342"/>
        <dbReference type="ChEBI" id="CHEBI:16235"/>
        <dbReference type="ChEBI" id="CHEBI:58703"/>
        <dbReference type="ChEBI" id="CHEBI:74269"/>
        <dbReference type="ChEBI" id="CHEBI:82833"/>
        <dbReference type="EC" id="2.4.2.29"/>
    </reaction>
</comment>
<comment type="cofactor">
    <cofactor evidence="1">
        <name>Zn(2+)</name>
        <dbReference type="ChEBI" id="CHEBI:29105"/>
    </cofactor>
    <text evidence="1">Binds 1 zinc ion per subunit.</text>
</comment>
<comment type="pathway">
    <text evidence="1">tRNA modification; tRNA-queuosine biosynthesis.</text>
</comment>
<comment type="subunit">
    <text evidence="1">Homodimer. Within each dimer, one monomer is responsible for RNA recognition and catalysis, while the other monomer binds to the replacement base PreQ1.</text>
</comment>
<comment type="similarity">
    <text evidence="1">Belongs to the queuine tRNA-ribosyltransferase family.</text>
</comment>
<reference key="1">
    <citation type="journal article" date="2005" name="Nucleic Acids Res.">
        <title>The genome sequence of Salmonella enterica serovar Choleraesuis, a highly invasive and resistant zoonotic pathogen.</title>
        <authorList>
            <person name="Chiu C.-H."/>
            <person name="Tang P."/>
            <person name="Chu C."/>
            <person name="Hu S."/>
            <person name="Bao Q."/>
            <person name="Yu J."/>
            <person name="Chou Y.-Y."/>
            <person name="Wang H.-S."/>
            <person name="Lee Y.-S."/>
        </authorList>
    </citation>
    <scope>NUCLEOTIDE SEQUENCE [LARGE SCALE GENOMIC DNA]</scope>
    <source>
        <strain>SC-B67</strain>
    </source>
</reference>
<keyword id="KW-0328">Glycosyltransferase</keyword>
<keyword id="KW-0479">Metal-binding</keyword>
<keyword id="KW-0671">Queuosine biosynthesis</keyword>
<keyword id="KW-0808">Transferase</keyword>
<keyword id="KW-0819">tRNA processing</keyword>
<keyword id="KW-0862">Zinc</keyword>
<name>TGT_SALCH</name>
<accession>Q57SF8</accession>
<feature type="chain" id="PRO_1000016842" description="Queuine tRNA-ribosyltransferase">
    <location>
        <begin position="1"/>
        <end position="375"/>
    </location>
</feature>
<feature type="region of interest" description="RNA binding" evidence="1">
    <location>
        <begin position="245"/>
        <end position="251"/>
    </location>
</feature>
<feature type="region of interest" description="RNA binding; important for wobble base 34 recognition" evidence="1">
    <location>
        <begin position="269"/>
        <end position="273"/>
    </location>
</feature>
<feature type="active site" description="Proton acceptor" evidence="1">
    <location>
        <position position="89"/>
    </location>
</feature>
<feature type="active site" description="Nucleophile" evidence="1">
    <location>
        <position position="264"/>
    </location>
</feature>
<feature type="binding site" evidence="1">
    <location>
        <begin position="89"/>
        <end position="93"/>
    </location>
    <ligand>
        <name>substrate</name>
    </ligand>
</feature>
<feature type="binding site" evidence="1">
    <location>
        <position position="143"/>
    </location>
    <ligand>
        <name>substrate</name>
    </ligand>
</feature>
<feature type="binding site" evidence="1">
    <location>
        <position position="187"/>
    </location>
    <ligand>
        <name>substrate</name>
    </ligand>
</feature>
<feature type="binding site" evidence="1">
    <location>
        <position position="214"/>
    </location>
    <ligand>
        <name>substrate</name>
    </ligand>
</feature>
<feature type="binding site" evidence="1">
    <location>
        <position position="302"/>
    </location>
    <ligand>
        <name>Zn(2+)</name>
        <dbReference type="ChEBI" id="CHEBI:29105"/>
    </ligand>
</feature>
<feature type="binding site" evidence="1">
    <location>
        <position position="304"/>
    </location>
    <ligand>
        <name>Zn(2+)</name>
        <dbReference type="ChEBI" id="CHEBI:29105"/>
    </ligand>
</feature>
<feature type="binding site" evidence="1">
    <location>
        <position position="307"/>
    </location>
    <ligand>
        <name>Zn(2+)</name>
        <dbReference type="ChEBI" id="CHEBI:29105"/>
    </ligand>
</feature>
<feature type="binding site" evidence="1">
    <location>
        <position position="333"/>
    </location>
    <ligand>
        <name>Zn(2+)</name>
        <dbReference type="ChEBI" id="CHEBI:29105"/>
    </ligand>
</feature>
<dbReference type="EC" id="2.4.2.29" evidence="1"/>
<dbReference type="EMBL" id="AE017220">
    <property type="protein sequence ID" value="AAX64353.1"/>
    <property type="molecule type" value="Genomic_DNA"/>
</dbReference>
<dbReference type="RefSeq" id="WP_000667306.1">
    <property type="nucleotide sequence ID" value="NC_006905.1"/>
</dbReference>
<dbReference type="SMR" id="Q57SF8"/>
<dbReference type="KEGG" id="sec:SCH_0447"/>
<dbReference type="HOGENOM" id="CLU_022060_0_1_6"/>
<dbReference type="UniPathway" id="UPA00392"/>
<dbReference type="Proteomes" id="UP000000538">
    <property type="component" value="Chromosome"/>
</dbReference>
<dbReference type="GO" id="GO:0005829">
    <property type="term" value="C:cytosol"/>
    <property type="evidence" value="ECO:0007669"/>
    <property type="project" value="TreeGrafter"/>
</dbReference>
<dbReference type="GO" id="GO:0046872">
    <property type="term" value="F:metal ion binding"/>
    <property type="evidence" value="ECO:0007669"/>
    <property type="project" value="UniProtKB-KW"/>
</dbReference>
<dbReference type="GO" id="GO:0008479">
    <property type="term" value="F:tRNA-guanosine(34) queuine transglycosylase activity"/>
    <property type="evidence" value="ECO:0007669"/>
    <property type="project" value="UniProtKB-UniRule"/>
</dbReference>
<dbReference type="GO" id="GO:0008616">
    <property type="term" value="P:queuosine biosynthetic process"/>
    <property type="evidence" value="ECO:0007669"/>
    <property type="project" value="UniProtKB-UniRule"/>
</dbReference>
<dbReference type="GO" id="GO:0002099">
    <property type="term" value="P:tRNA wobble guanine modification"/>
    <property type="evidence" value="ECO:0007669"/>
    <property type="project" value="TreeGrafter"/>
</dbReference>
<dbReference type="GO" id="GO:0101030">
    <property type="term" value="P:tRNA-guanine transglycosylation"/>
    <property type="evidence" value="ECO:0007669"/>
    <property type="project" value="InterPro"/>
</dbReference>
<dbReference type="FunFam" id="3.20.20.105:FF:000001">
    <property type="entry name" value="Queuine tRNA-ribosyltransferase"/>
    <property type="match status" value="1"/>
</dbReference>
<dbReference type="Gene3D" id="3.20.20.105">
    <property type="entry name" value="Queuine tRNA-ribosyltransferase-like"/>
    <property type="match status" value="1"/>
</dbReference>
<dbReference type="HAMAP" id="MF_00168">
    <property type="entry name" value="Q_tRNA_Tgt"/>
    <property type="match status" value="1"/>
</dbReference>
<dbReference type="InterPro" id="IPR050076">
    <property type="entry name" value="ArchSynthase1/Queuine_TRR"/>
</dbReference>
<dbReference type="InterPro" id="IPR004803">
    <property type="entry name" value="TGT"/>
</dbReference>
<dbReference type="InterPro" id="IPR036511">
    <property type="entry name" value="TGT-like_sf"/>
</dbReference>
<dbReference type="InterPro" id="IPR002616">
    <property type="entry name" value="tRNA_ribo_trans-like"/>
</dbReference>
<dbReference type="NCBIfam" id="TIGR00430">
    <property type="entry name" value="Q_tRNA_tgt"/>
    <property type="match status" value="1"/>
</dbReference>
<dbReference type="NCBIfam" id="TIGR00449">
    <property type="entry name" value="tgt_general"/>
    <property type="match status" value="1"/>
</dbReference>
<dbReference type="PANTHER" id="PTHR46499">
    <property type="entry name" value="QUEUINE TRNA-RIBOSYLTRANSFERASE"/>
    <property type="match status" value="1"/>
</dbReference>
<dbReference type="PANTHER" id="PTHR46499:SF1">
    <property type="entry name" value="QUEUINE TRNA-RIBOSYLTRANSFERASE"/>
    <property type="match status" value="1"/>
</dbReference>
<dbReference type="Pfam" id="PF01702">
    <property type="entry name" value="TGT"/>
    <property type="match status" value="1"/>
</dbReference>
<dbReference type="SUPFAM" id="SSF51713">
    <property type="entry name" value="tRNA-guanine transglycosylase"/>
    <property type="match status" value="1"/>
</dbReference>
<proteinExistence type="inferred from homology"/>
<protein>
    <recommendedName>
        <fullName evidence="1">Queuine tRNA-ribosyltransferase</fullName>
        <ecNumber evidence="1">2.4.2.29</ecNumber>
    </recommendedName>
    <alternativeName>
        <fullName evidence="1">Guanine insertion enzyme</fullName>
    </alternativeName>
    <alternativeName>
        <fullName evidence="1">tRNA-guanine transglycosylase</fullName>
    </alternativeName>
</protein>
<organism>
    <name type="scientific">Salmonella choleraesuis (strain SC-B67)</name>
    <dbReference type="NCBI Taxonomy" id="321314"/>
    <lineage>
        <taxon>Bacteria</taxon>
        <taxon>Pseudomonadati</taxon>
        <taxon>Pseudomonadota</taxon>
        <taxon>Gammaproteobacteria</taxon>
        <taxon>Enterobacterales</taxon>
        <taxon>Enterobacteriaceae</taxon>
        <taxon>Salmonella</taxon>
    </lineage>
</organism>
<gene>
    <name evidence="1" type="primary">tgt</name>
    <name type="ordered locus">SCH_0447</name>
</gene>
<evidence type="ECO:0000255" key="1">
    <source>
        <dbReference type="HAMAP-Rule" id="MF_00168"/>
    </source>
</evidence>